<keyword id="KW-0150">Chloroplast</keyword>
<keyword id="KW-0472">Membrane</keyword>
<keyword id="KW-0934">Plastid</keyword>
<keyword id="KW-1185">Reference proteome</keyword>
<keyword id="KW-0793">Thylakoid</keyword>
<keyword id="KW-0812">Transmembrane</keyword>
<keyword id="KW-1133">Transmembrane helix</keyword>
<feature type="chain" id="PRO_0000207935" description="Protein PsbN">
    <location>
        <begin position="1"/>
        <end position="43"/>
    </location>
</feature>
<feature type="transmembrane region" description="Helical" evidence="1">
    <location>
        <begin position="5"/>
        <end position="27"/>
    </location>
</feature>
<name>PSBN_ORYSJ</name>
<organism>
    <name type="scientific">Oryza sativa subsp. japonica</name>
    <name type="common">Rice</name>
    <dbReference type="NCBI Taxonomy" id="39947"/>
    <lineage>
        <taxon>Eukaryota</taxon>
        <taxon>Viridiplantae</taxon>
        <taxon>Streptophyta</taxon>
        <taxon>Embryophyta</taxon>
        <taxon>Tracheophyta</taxon>
        <taxon>Spermatophyta</taxon>
        <taxon>Magnoliopsida</taxon>
        <taxon>Liliopsida</taxon>
        <taxon>Poales</taxon>
        <taxon>Poaceae</taxon>
        <taxon>BOP clade</taxon>
        <taxon>Oryzoideae</taxon>
        <taxon>Oryzeae</taxon>
        <taxon>Oryzinae</taxon>
        <taxon>Oryza</taxon>
        <taxon>Oryza sativa</taxon>
    </lineage>
</organism>
<accession>P68853</accession>
<accession>P12171</accession>
<dbReference type="EMBL" id="X15901">
    <property type="protein sequence ID" value="CAA33975.1"/>
    <property type="molecule type" value="Genomic_DNA"/>
</dbReference>
<dbReference type="EMBL" id="AY522330">
    <property type="status" value="NOT_ANNOTATED_CDS"/>
    <property type="molecule type" value="Genomic_DNA"/>
</dbReference>
<dbReference type="PIR" id="JQ0255">
    <property type="entry name" value="F2RZN"/>
</dbReference>
<dbReference type="RefSeq" id="NP_039413.1">
    <property type="nucleotide sequence ID" value="NC_001320.1"/>
</dbReference>
<dbReference type="SMR" id="P68853"/>
<dbReference type="FunCoup" id="P68853">
    <property type="interactions" value="67"/>
</dbReference>
<dbReference type="STRING" id="39947.P68853"/>
<dbReference type="PaxDb" id="39947-P68853"/>
<dbReference type="EnsemblPlants" id="transcript-psbN">
    <property type="protein sequence ID" value="cds-CAA33975.1"/>
    <property type="gene ID" value="gene-psbN"/>
</dbReference>
<dbReference type="GeneID" id="3131420"/>
<dbReference type="Gramene" id="transcript-psbN">
    <property type="protein sequence ID" value="cds-CAA33975.1"/>
    <property type="gene ID" value="gene-psbN"/>
</dbReference>
<dbReference type="KEGG" id="dosa:psbN"/>
<dbReference type="KEGG" id="osa:3131420"/>
<dbReference type="InParanoid" id="P68853"/>
<dbReference type="OrthoDB" id="1860403at2759"/>
<dbReference type="Proteomes" id="UP000059680">
    <property type="component" value="Chloroplast"/>
</dbReference>
<dbReference type="GO" id="GO:0009535">
    <property type="term" value="C:chloroplast thylakoid membrane"/>
    <property type="evidence" value="ECO:0007669"/>
    <property type="project" value="UniProtKB-SubCell"/>
</dbReference>
<dbReference type="GO" id="GO:0009536">
    <property type="term" value="C:plastid"/>
    <property type="evidence" value="ECO:0000305"/>
    <property type="project" value="Gramene"/>
</dbReference>
<dbReference type="GO" id="GO:0015979">
    <property type="term" value="P:photosynthesis"/>
    <property type="evidence" value="ECO:0007669"/>
    <property type="project" value="InterPro"/>
</dbReference>
<dbReference type="HAMAP" id="MF_00293">
    <property type="entry name" value="PSII_PsbN"/>
    <property type="match status" value="1"/>
</dbReference>
<dbReference type="InterPro" id="IPR003398">
    <property type="entry name" value="PSII_PsbN"/>
</dbReference>
<dbReference type="PANTHER" id="PTHR35326">
    <property type="entry name" value="PROTEIN PSBN"/>
    <property type="match status" value="1"/>
</dbReference>
<dbReference type="PANTHER" id="PTHR35326:SF3">
    <property type="entry name" value="PROTEIN PSBN"/>
    <property type="match status" value="1"/>
</dbReference>
<dbReference type="Pfam" id="PF02468">
    <property type="entry name" value="PsbN"/>
    <property type="match status" value="1"/>
</dbReference>
<evidence type="ECO:0000255" key="1">
    <source>
        <dbReference type="HAMAP-Rule" id="MF_00293"/>
    </source>
</evidence>
<geneLocation type="chloroplast"/>
<sequence>METATLVAISISGLLVSFTGYALYTAFGQPSQQLRDPFEEHGD</sequence>
<reference key="1">
    <citation type="journal article" date="1989" name="Mol. Gen. Genet.">
        <title>The complete sequence of the rice (Oryza sativa) chloroplast genome: intermolecular recombination between distinct tRNA genes accounts for a major plastid DNA inversion during the evolution of the cereals.</title>
        <authorList>
            <person name="Hiratsuka J."/>
            <person name="Shimada H."/>
            <person name="Whittier R."/>
            <person name="Ishibashi T."/>
            <person name="Sakamoto M."/>
            <person name="Mori M."/>
            <person name="Kondo C."/>
            <person name="Honji Y."/>
            <person name="Sun C.-R."/>
            <person name="Meng B.-Y."/>
            <person name="Li Y.-Q."/>
            <person name="Kanno A."/>
            <person name="Nishizawa Y."/>
            <person name="Hirai A."/>
            <person name="Shinozaki K."/>
            <person name="Sugiura M."/>
        </authorList>
    </citation>
    <scope>NUCLEOTIDE SEQUENCE [LARGE SCALE GENOMIC DNA]</scope>
    <source>
        <strain>cv. Nipponbare</strain>
    </source>
</reference>
<reference key="2">
    <citation type="journal article" date="2004" name="Plant Physiol.">
        <title>A comparison of rice chloroplast genomes.</title>
        <authorList>
            <person name="Tang J."/>
            <person name="Xia H."/>
            <person name="Cao M."/>
            <person name="Zhang X."/>
            <person name="Zeng W."/>
            <person name="Hu S."/>
            <person name="Tong W."/>
            <person name="Wang J."/>
            <person name="Wang J."/>
            <person name="Yu J."/>
            <person name="Yang H."/>
            <person name="Zhu L."/>
        </authorList>
    </citation>
    <scope>NUCLEOTIDE SEQUENCE [LARGE SCALE GENOMIC DNA]</scope>
    <source>
        <strain>cv. Nipponbare</strain>
    </source>
</reference>
<protein>
    <recommendedName>
        <fullName evidence="1">Protein PsbN</fullName>
    </recommendedName>
</protein>
<proteinExistence type="inferred from homology"/>
<gene>
    <name evidence="1" type="primary">psbN</name>
    <name type="ordered locus">LOC_Osp1g00630</name>
</gene>
<comment type="function">
    <text evidence="1">May play a role in photosystem I and II biogenesis.</text>
</comment>
<comment type="subcellular location">
    <subcellularLocation>
        <location evidence="1">Plastid</location>
        <location evidence="1">Chloroplast thylakoid membrane</location>
        <topology evidence="1">Single-pass membrane protein</topology>
    </subcellularLocation>
</comment>
<comment type="similarity">
    <text evidence="1">Belongs to the PsbN family.</text>
</comment>
<comment type="caution">
    <text evidence="1">Originally thought to be a component of PSII; based on experiments in Synechocystis, N.tabacum and barley, and its absence from PSII in T.elongatus and T.vulcanus, this is probably not true.</text>
</comment>